<protein>
    <recommendedName>
        <fullName>RNA polymerase II-associated protein 3</fullName>
    </recommendedName>
</protein>
<accession>Q6NU95</accession>
<evidence type="ECO:0000250" key="1">
    <source>
        <dbReference type="UniProtKB" id="Q9H6T3"/>
    </source>
</evidence>
<evidence type="ECO:0000256" key="2">
    <source>
        <dbReference type="SAM" id="MobiDB-lite"/>
    </source>
</evidence>
<evidence type="ECO:0000305" key="3"/>
<name>RPAP3_XENLA</name>
<comment type="function">
    <text evidence="1">May for an interface between the RNA polymerase II enzyme and chaperone/scaffolding protein.</text>
</comment>
<comment type="similarity">
    <text evidence="3">Belongs to the RPAP3 family.</text>
</comment>
<reference key="1">
    <citation type="submission" date="2004-04" db="EMBL/GenBank/DDBJ databases">
        <authorList>
            <consortium name="NIH - Xenopus Gene Collection (XGC) project"/>
        </authorList>
    </citation>
    <scope>NUCLEOTIDE SEQUENCE [LARGE SCALE MRNA]</scope>
    <source>
        <tissue>Ovary</tissue>
    </source>
</reference>
<gene>
    <name type="primary">rpap3</name>
</gene>
<dbReference type="EMBL" id="BC068702">
    <property type="protein sequence ID" value="AAH68702.1"/>
    <property type="molecule type" value="mRNA"/>
</dbReference>
<dbReference type="RefSeq" id="NP_001084525.1">
    <property type="nucleotide sequence ID" value="NM_001091056.1"/>
</dbReference>
<dbReference type="SMR" id="Q6NU95"/>
<dbReference type="BioGRID" id="100894">
    <property type="interactions" value="2"/>
</dbReference>
<dbReference type="IntAct" id="Q6NU95">
    <property type="interactions" value="1"/>
</dbReference>
<dbReference type="DNASU" id="414472"/>
<dbReference type="GeneID" id="414472"/>
<dbReference type="KEGG" id="xla:414472"/>
<dbReference type="AGR" id="Xenbase:XB-GENE-5779079"/>
<dbReference type="CTD" id="414472"/>
<dbReference type="Xenbase" id="XB-GENE-5779079">
    <property type="gene designation" value="rpap3.L"/>
</dbReference>
<dbReference type="OrthoDB" id="629492at2759"/>
<dbReference type="Proteomes" id="UP000186698">
    <property type="component" value="Chromosome 3L"/>
</dbReference>
<dbReference type="Bgee" id="414472">
    <property type="expression patterns" value="Expressed in gastrula and 19 other cell types or tissues"/>
</dbReference>
<dbReference type="GO" id="GO:0101031">
    <property type="term" value="C:protein folding chaperone complex"/>
    <property type="evidence" value="ECO:0007669"/>
    <property type="project" value="TreeGrafter"/>
</dbReference>
<dbReference type="FunFam" id="1.25.40.10:FF:000057">
    <property type="entry name" value="RNA polymerase II associated protein 3"/>
    <property type="match status" value="1"/>
</dbReference>
<dbReference type="Gene3D" id="1.25.40.10">
    <property type="entry name" value="Tetratricopeptide repeat domain"/>
    <property type="match status" value="2"/>
</dbReference>
<dbReference type="InterPro" id="IPR051966">
    <property type="entry name" value="RPAP3"/>
</dbReference>
<dbReference type="InterPro" id="IPR025986">
    <property type="entry name" value="RPAP3-like_C"/>
</dbReference>
<dbReference type="InterPro" id="IPR011990">
    <property type="entry name" value="TPR-like_helical_dom_sf"/>
</dbReference>
<dbReference type="InterPro" id="IPR013105">
    <property type="entry name" value="TPR_2"/>
</dbReference>
<dbReference type="InterPro" id="IPR019734">
    <property type="entry name" value="TPR_rpt"/>
</dbReference>
<dbReference type="PANTHER" id="PTHR46423">
    <property type="entry name" value="RNA POLYMERASE II-ASSOCIATED PROTEIN 3"/>
    <property type="match status" value="1"/>
</dbReference>
<dbReference type="PANTHER" id="PTHR46423:SF1">
    <property type="entry name" value="RNA POLYMERASE II-ASSOCIATED PROTEIN 3"/>
    <property type="match status" value="1"/>
</dbReference>
<dbReference type="Pfam" id="PF13877">
    <property type="entry name" value="RPAP3_C"/>
    <property type="match status" value="1"/>
</dbReference>
<dbReference type="Pfam" id="PF07719">
    <property type="entry name" value="TPR_2"/>
    <property type="match status" value="1"/>
</dbReference>
<dbReference type="Pfam" id="PF13181">
    <property type="entry name" value="TPR_8"/>
    <property type="match status" value="3"/>
</dbReference>
<dbReference type="SMART" id="SM00028">
    <property type="entry name" value="TPR"/>
    <property type="match status" value="6"/>
</dbReference>
<dbReference type="SUPFAM" id="SSF48452">
    <property type="entry name" value="TPR-like"/>
    <property type="match status" value="2"/>
</dbReference>
<dbReference type="PROSITE" id="PS50005">
    <property type="entry name" value="TPR"/>
    <property type="match status" value="5"/>
</dbReference>
<dbReference type="PROSITE" id="PS50293">
    <property type="entry name" value="TPR_REGION"/>
    <property type="match status" value="1"/>
</dbReference>
<organism>
    <name type="scientific">Xenopus laevis</name>
    <name type="common">African clawed frog</name>
    <dbReference type="NCBI Taxonomy" id="8355"/>
    <lineage>
        <taxon>Eukaryota</taxon>
        <taxon>Metazoa</taxon>
        <taxon>Chordata</taxon>
        <taxon>Craniata</taxon>
        <taxon>Vertebrata</taxon>
        <taxon>Euteleostomi</taxon>
        <taxon>Amphibia</taxon>
        <taxon>Batrachia</taxon>
        <taxon>Anura</taxon>
        <taxon>Pipoidea</taxon>
        <taxon>Pipidae</taxon>
        <taxon>Xenopodinae</taxon>
        <taxon>Xenopus</taxon>
        <taxon>Xenopus</taxon>
    </lineage>
</organism>
<feature type="chain" id="PRO_0000302798" description="RNA polymerase II-associated protein 3">
    <location>
        <begin position="1"/>
        <end position="660"/>
    </location>
</feature>
<feature type="repeat" description="TPR 1">
    <location>
        <begin position="8"/>
        <end position="41"/>
    </location>
</feature>
<feature type="repeat" description="TPR 2">
    <location>
        <begin position="132"/>
        <end position="165"/>
    </location>
</feature>
<feature type="repeat" description="TPR 3">
    <location>
        <begin position="167"/>
        <end position="199"/>
    </location>
</feature>
<feature type="repeat" description="TPR 4">
    <location>
        <begin position="200"/>
        <end position="233"/>
    </location>
</feature>
<feature type="repeat" description="TPR 5">
    <location>
        <begin position="284"/>
        <end position="317"/>
    </location>
</feature>
<feature type="repeat" description="TPR 6">
    <location>
        <begin position="319"/>
        <end position="351"/>
    </location>
</feature>
<feature type="repeat" description="TPR 7">
    <location>
        <begin position="352"/>
        <end position="385"/>
    </location>
</feature>
<feature type="repeat" description="TPR 8">
    <location>
        <begin position="502"/>
        <end position="539"/>
    </location>
</feature>
<feature type="region of interest" description="Disordered" evidence="2">
    <location>
        <begin position="35"/>
        <end position="80"/>
    </location>
</feature>
<feature type="region of interest" description="Disordered" evidence="2">
    <location>
        <begin position="106"/>
        <end position="125"/>
    </location>
</feature>
<feature type="region of interest" description="Disordered" evidence="2">
    <location>
        <begin position="496"/>
        <end position="517"/>
    </location>
</feature>
<feature type="compositionally biased region" description="Basic residues" evidence="2">
    <location>
        <begin position="60"/>
        <end position="69"/>
    </location>
</feature>
<feature type="compositionally biased region" description="Basic and acidic residues" evidence="2">
    <location>
        <begin position="71"/>
        <end position="80"/>
    </location>
</feature>
<keyword id="KW-1185">Reference proteome</keyword>
<keyword id="KW-0677">Repeat</keyword>
<keyword id="KW-0802">TPR repeat</keyword>
<proteinExistence type="evidence at transcript level"/>
<sequence length="660" mass="75106">MSSPSKAIELQLQMKQNAEDLQDFMREMESWEKDIKQKDAKLRNQTGVENQILPPIRNKDFKKKKKNKPKPPLEKSQEDCLNPKKKLLDYEYWDKLDVDKALEDIDKDNSNETSSDSECGDEDAITVDTEKALSEKEKGNNYFKSGKYDEAIECYTRGMDADPYNAILPTNRASAFFRLKKFAVAESDCNLAIALNRDYAKAYARRGAARLALKNLQGAKEDYEKVLELDANNFEAKNELRKINQELYSSASDVQENMATEAKITVENEEEKKQIEIQQRKQQAIMQKDLGNAYFKEGKYEIAIECYSQGMEADNTNALLPANRAMAYLKIQKYKEAEADCTLAISLDASYCKAFARRGTASIMLGKQKEAKEDFEMVLKLDPGNKQAVLELAKISQELRSIEKDRNGNKDSNQRKLINTVEKLPHLRSTKPLRRMVIEEVGGPAEIFNTSLKETNHRKADSVDLTAETNTQDLNQEQNICNSPDVPSPKIPKIEEISDTPGSCEPTTGEDYLTSRPSPPKIEKVVSTFSESLNIGIPAVPTNSFQLESDFRRLKGNPDLLYVYLKQIEPTLYGKLFKKALDPDLFSDILTILREQFINKDSPDLIFEILQRLSELKRFDMAVMFLSESDKNNAHILFSHLEQSMNANVSFNALKKKYGL</sequence>